<dbReference type="EMBL" id="AY209950">
    <property type="protein sequence ID" value="AAO46266.1"/>
    <property type="molecule type" value="Genomic_RNA"/>
</dbReference>
<dbReference type="SMR" id="Q6XU90"/>
<dbReference type="GO" id="GO:0033650">
    <property type="term" value="C:host cell mitochondrion"/>
    <property type="evidence" value="ECO:0007669"/>
    <property type="project" value="UniProtKB-SubCell"/>
</dbReference>
<dbReference type="GO" id="GO:0042025">
    <property type="term" value="C:host cell nucleus"/>
    <property type="evidence" value="ECO:0007669"/>
    <property type="project" value="UniProtKB-SubCell"/>
</dbReference>
<dbReference type="GO" id="GO:0044423">
    <property type="term" value="C:virion component"/>
    <property type="evidence" value="ECO:0007669"/>
    <property type="project" value="UniProtKB-UniRule"/>
</dbReference>
<dbReference type="GO" id="GO:0003723">
    <property type="term" value="F:RNA binding"/>
    <property type="evidence" value="ECO:0007669"/>
    <property type="project" value="UniProtKB-UniRule"/>
</dbReference>
<dbReference type="GO" id="GO:0003968">
    <property type="term" value="F:RNA-directed RNA polymerase activity"/>
    <property type="evidence" value="ECO:0007669"/>
    <property type="project" value="UniProtKB-UniRule"/>
</dbReference>
<dbReference type="GO" id="GO:0006370">
    <property type="term" value="P:7-methylguanosine mRNA capping"/>
    <property type="evidence" value="ECO:0007669"/>
    <property type="project" value="UniProtKB-UniRule"/>
</dbReference>
<dbReference type="GO" id="GO:0075526">
    <property type="term" value="P:cap snatching"/>
    <property type="evidence" value="ECO:0007669"/>
    <property type="project" value="UniProtKB-UniRule"/>
</dbReference>
<dbReference type="GO" id="GO:0006351">
    <property type="term" value="P:DNA-templated transcription"/>
    <property type="evidence" value="ECO:0007669"/>
    <property type="project" value="UniProtKB-UniRule"/>
</dbReference>
<dbReference type="GO" id="GO:0039545">
    <property type="term" value="P:symbiont-mediated suppression of host cytoplasmic pattern recognition receptor signaling pathway via inhibition of MAVS activity"/>
    <property type="evidence" value="ECO:0007669"/>
    <property type="project" value="UniProtKB-UniRule"/>
</dbReference>
<dbReference type="GO" id="GO:0039657">
    <property type="term" value="P:symbiont-mediated suppression of host gene expression"/>
    <property type="evidence" value="ECO:0007669"/>
    <property type="project" value="UniProtKB-KW"/>
</dbReference>
<dbReference type="GO" id="GO:0039523">
    <property type="term" value="P:symbiont-mediated suppression of host mRNA transcription via inhibition of RNA polymerase II activity"/>
    <property type="evidence" value="ECO:0007669"/>
    <property type="project" value="UniProtKB-UniRule"/>
</dbReference>
<dbReference type="GO" id="GO:0039694">
    <property type="term" value="P:viral RNA genome replication"/>
    <property type="evidence" value="ECO:0007669"/>
    <property type="project" value="InterPro"/>
</dbReference>
<dbReference type="FunFam" id="3.30.30.90:FF:000001">
    <property type="entry name" value="Polymerase basic protein 2"/>
    <property type="match status" value="1"/>
</dbReference>
<dbReference type="Gene3D" id="3.30.30.90">
    <property type="entry name" value="Polymerase Basic Protein 2, C-terminal domain"/>
    <property type="match status" value="1"/>
</dbReference>
<dbReference type="HAMAP" id="MF_04062">
    <property type="entry name" value="INV_PB2"/>
    <property type="match status" value="1"/>
</dbReference>
<dbReference type="InterPro" id="IPR049110">
    <property type="entry name" value="Flu_PB2_2nd"/>
</dbReference>
<dbReference type="InterPro" id="IPR049114">
    <property type="entry name" value="Flu_PB2_6th"/>
</dbReference>
<dbReference type="InterPro" id="IPR049115">
    <property type="entry name" value="Flu_PB2_C"/>
</dbReference>
<dbReference type="InterPro" id="IPR048298">
    <property type="entry name" value="Flu_PB2_CAP-bd"/>
</dbReference>
<dbReference type="InterPro" id="IPR049111">
    <property type="entry name" value="Flu_PB2_middle"/>
</dbReference>
<dbReference type="InterPro" id="IPR049106">
    <property type="entry name" value="Flu_PB2_N"/>
</dbReference>
<dbReference type="InterPro" id="IPR001591">
    <property type="entry name" value="INV_PB2"/>
</dbReference>
<dbReference type="InterPro" id="IPR049113">
    <property type="entry name" value="PB2_helical"/>
</dbReference>
<dbReference type="InterPro" id="IPR037258">
    <property type="entry name" value="PDB2_C"/>
</dbReference>
<dbReference type="Pfam" id="PF20947">
    <property type="entry name" value="Flu_PB2_1st"/>
    <property type="match status" value="1"/>
</dbReference>
<dbReference type="Pfam" id="PF20948">
    <property type="entry name" value="Flu_PB2_2nd"/>
    <property type="match status" value="1"/>
</dbReference>
<dbReference type="Pfam" id="PF20949">
    <property type="entry name" value="Flu_PB2_3rd"/>
    <property type="match status" value="1"/>
</dbReference>
<dbReference type="Pfam" id="PF20950">
    <property type="entry name" value="Flu_PB2_4th"/>
    <property type="match status" value="1"/>
</dbReference>
<dbReference type="Pfam" id="PF00604">
    <property type="entry name" value="Flu_PB2_5th"/>
    <property type="match status" value="1"/>
</dbReference>
<dbReference type="Pfam" id="PF20951">
    <property type="entry name" value="Flu_PB2_6th"/>
    <property type="match status" value="1"/>
</dbReference>
<dbReference type="Pfam" id="PF20952">
    <property type="entry name" value="Flu_PB2_7th"/>
    <property type="match status" value="1"/>
</dbReference>
<dbReference type="SUPFAM" id="SSF160453">
    <property type="entry name" value="PB2 C-terminal domain-like"/>
    <property type="match status" value="1"/>
</dbReference>
<proteinExistence type="inferred from homology"/>
<name>PB2_I67A0</name>
<evidence type="ECO:0000255" key="1">
    <source>
        <dbReference type="HAMAP-Rule" id="MF_04062"/>
    </source>
</evidence>
<reference key="1">
    <citation type="journal article" date="2004" name="Virology">
        <title>Genetic analysis of human H2N2 and early H3N2 influenza viruses, 1957-1972: evidence for genetic divergence and multiple reassortment events.</title>
        <authorList>
            <person name="Lindstrom S.E."/>
            <person name="Cox N.J."/>
            <person name="Klimov A."/>
        </authorList>
    </citation>
    <scope>NUCLEOTIDE SEQUENCE [GENOMIC RNA]</scope>
</reference>
<keyword id="KW-1157">Cap snatching</keyword>
<keyword id="KW-1262">Eukaryotic host gene expression shutoff by virus</keyword>
<keyword id="KW-1191">Eukaryotic host transcription shutoff by virus</keyword>
<keyword id="KW-1190">Host gene expression shutoff by virus</keyword>
<keyword id="KW-1045">Host mitochondrion</keyword>
<keyword id="KW-1048">Host nucleus</keyword>
<keyword id="KW-0945">Host-virus interaction</keyword>
<keyword id="KW-1090">Inhibition of host innate immune response by virus</keyword>
<keyword id="KW-1097">Inhibition of host MAVS by virus</keyword>
<keyword id="KW-1113">Inhibition of host RLR pathway by virus</keyword>
<keyword id="KW-1104">Inhibition of host RNA polymerase II by virus</keyword>
<keyword id="KW-0506">mRNA capping</keyword>
<keyword id="KW-0507">mRNA processing</keyword>
<keyword id="KW-0899">Viral immunoevasion</keyword>
<keyword id="KW-1195">Viral transcription</keyword>
<keyword id="KW-0946">Virion</keyword>
<protein>
    <recommendedName>
        <fullName evidence="1">Polymerase basic protein 2</fullName>
    </recommendedName>
    <alternativeName>
        <fullName evidence="1">RNA-directed RNA polymerase subunit P3</fullName>
    </alternativeName>
</protein>
<organismHost>
    <name type="scientific">Aves</name>
    <dbReference type="NCBI Taxonomy" id="8782"/>
</organismHost>
<organismHost>
    <name type="scientific">Homo sapiens</name>
    <name type="common">Human</name>
    <dbReference type="NCBI Taxonomy" id="9606"/>
</organismHost>
<accession>Q6XU90</accession>
<organism>
    <name type="scientific">Influenza A virus (strain A/Tokyo/3/1967 H2N2)</name>
    <dbReference type="NCBI Taxonomy" id="380960"/>
    <lineage>
        <taxon>Viruses</taxon>
        <taxon>Riboviria</taxon>
        <taxon>Orthornavirae</taxon>
        <taxon>Negarnaviricota</taxon>
        <taxon>Polyploviricotina</taxon>
        <taxon>Insthoviricetes</taxon>
        <taxon>Articulavirales</taxon>
        <taxon>Orthomyxoviridae</taxon>
        <taxon>Alphainfluenzavirus</taxon>
        <taxon>Alphainfluenzavirus influenzae</taxon>
        <taxon>Influenza A virus</taxon>
    </lineage>
</organism>
<sequence>MERIKELRNLMSQSRTREILTKTTVDHMAIIKKYTSGRQEKNPSLRMKWMMAMKYPITADKRITEMVPERNEQGQTLWSKMSDAGSDRVMVSPLAVTWWNRNGPMTSTVHYPKVYNTYFEKVERLKHGTFGPVHFRNQVKIRRRVDINPGHADLSAKEAQDVIMEVVFPNEVGARILTSESQLTITKEKKEELQDCKISPLMVAYMLERELVRKTRFLPVAGGTSSVYIEVLHLTQGTCWEQMYTPGGEVRNDDVDQSLIIAARNIVRRAAVSADPLASLLEMCHSTQIGGTKMVDILRQNPTEEQAVDICKAAMGLRISSSFSFGGFTFKRTSGSSIKREEEVLTGNLQTLKIRVHEGYEEFTMVGKRATAILRKATRRLVQLIVSGRDEQSIVEAIIVAMVFSQEDCMIKAVRGDLNFVNRANQRLNPMHQLLRHFQKDAKVLFQNWGIEHIDNVMGMIGVLPDMTPSTEMSMRGIRVSKMGVDEYSSTERVVVSIDRFLRVRDQRGNVLLSPEEVSETQGTEKLTITYSSSMMWEINGPESVLVNTYQWIIRNWETVKIQWSQNPTMLYNKMEFEPFQSLVPKAIRGQYSGFVRTLFQQMRDVLGTFDTTQIIKLLPFAAAPPKQSRMQFSSLTVNVRGSGMRILVRGNSPVFNYNKTTKRLTILGKDAGTLIEDPDEGTSGVESAVLRGFLILGKEDRRYGPALSINELSNLAKGEKANVLIGQGDVVLVMKRKRDSSILTDSQTATKRIRMAIN</sequence>
<feature type="chain" id="PRO_0000279650" description="Polymerase basic protein 2">
    <location>
        <begin position="1"/>
        <end position="759"/>
    </location>
</feature>
<feature type="short sequence motif" description="Nuclear localization signal" evidence="1">
    <location>
        <begin position="736"/>
        <end position="739"/>
    </location>
</feature>
<feature type="site" description="Mammalian adaptation" evidence="1">
    <location>
        <position position="627"/>
    </location>
</feature>
<comment type="function">
    <text evidence="1">Plays an essential role in transcription initiation and cap-stealing mechanism, in which cellular capped pre-mRNAs are used to generate primers for viral transcription. Recognizes and binds the 7-methylguanosine-containing cap of the target pre-RNA which is subsequently cleaved after 10-13 nucleotides by the viral protein PA. Plays a role in the initiation of the viral genome replication and modulates the activity of the ribonucleoprotein (RNP) complex. In addition, participates in the inhibition of type I interferon induction through interaction with and inhibition of the host mitochondrial antiviral signaling protein MAVS.</text>
</comment>
<comment type="subunit">
    <text evidence="1">Influenza RNA polymerase is composed of three subunits: PB1, PB2 and PA. Interacts (via N-terminus) with PB1 (via C-terminus). Interacts with nucleoprotein NP (via N-terminus). Interacts (via N-terminus) with host MAVS (via N-terminus); this interaction inhibits host innate immune response.</text>
</comment>
<comment type="subcellular location">
    <subcellularLocation>
        <location evidence="1">Virion</location>
    </subcellularLocation>
    <subcellularLocation>
        <location evidence="1">Host nucleus</location>
    </subcellularLocation>
    <subcellularLocation>
        <location evidence="1">Host mitochondrion</location>
    </subcellularLocation>
</comment>
<comment type="similarity">
    <text evidence="1">Belongs to the influenza viruses PB2 family.</text>
</comment>
<gene>
    <name evidence="1" type="primary">PB2</name>
</gene>